<name>LEUD_BRUME</name>
<evidence type="ECO:0000255" key="1">
    <source>
        <dbReference type="HAMAP-Rule" id="MF_01031"/>
    </source>
</evidence>
<evidence type="ECO:0000305" key="2"/>
<comment type="function">
    <text evidence="1">Catalyzes the isomerization between 2-isopropylmalate and 3-isopropylmalate, via the formation of 2-isopropylmaleate.</text>
</comment>
<comment type="catalytic activity">
    <reaction evidence="1">
        <text>(2R,3S)-3-isopropylmalate = (2S)-2-isopropylmalate</text>
        <dbReference type="Rhea" id="RHEA:32287"/>
        <dbReference type="ChEBI" id="CHEBI:1178"/>
        <dbReference type="ChEBI" id="CHEBI:35121"/>
        <dbReference type="EC" id="4.2.1.33"/>
    </reaction>
</comment>
<comment type="pathway">
    <text evidence="1">Amino-acid biosynthesis; L-leucine biosynthesis; L-leucine from 3-methyl-2-oxobutanoate: step 2/4.</text>
</comment>
<comment type="subunit">
    <text evidence="1">Heterodimer of LeuC and LeuD.</text>
</comment>
<comment type="similarity">
    <text evidence="1">Belongs to the LeuD family. LeuD type 1 subfamily.</text>
</comment>
<comment type="sequence caution" evidence="2">
    <conflict type="erroneous initiation">
        <sequence resource="EMBL-CDS" id="AAL53653"/>
    </conflict>
</comment>
<organism>
    <name type="scientific">Brucella melitensis biotype 1 (strain ATCC 23456 / CCUG 17765 / NCTC 10094 / 16M)</name>
    <dbReference type="NCBI Taxonomy" id="224914"/>
    <lineage>
        <taxon>Bacteria</taxon>
        <taxon>Pseudomonadati</taxon>
        <taxon>Pseudomonadota</taxon>
        <taxon>Alphaproteobacteria</taxon>
        <taxon>Hyphomicrobiales</taxon>
        <taxon>Brucellaceae</taxon>
        <taxon>Brucella/Ochrobactrum group</taxon>
        <taxon>Brucella</taxon>
    </lineage>
</organism>
<dbReference type="EC" id="4.2.1.33" evidence="1"/>
<dbReference type="EMBL" id="AE008918">
    <property type="protein sequence ID" value="AAL53653.1"/>
    <property type="status" value="ALT_INIT"/>
    <property type="molecule type" value="Genomic_DNA"/>
</dbReference>
<dbReference type="PIR" id="AB3561">
    <property type="entry name" value="AB3561"/>
</dbReference>
<dbReference type="RefSeq" id="WP_002965763.1">
    <property type="nucleotide sequence ID" value="NZ_GG703779.1"/>
</dbReference>
<dbReference type="SMR" id="P65275"/>
<dbReference type="GeneID" id="97535045"/>
<dbReference type="KEGG" id="bme:BMEII0411"/>
<dbReference type="KEGG" id="bmel:DK63_2826"/>
<dbReference type="PATRIC" id="fig|224914.52.peg.2962"/>
<dbReference type="eggNOG" id="COG0066">
    <property type="taxonomic scope" value="Bacteria"/>
</dbReference>
<dbReference type="PhylomeDB" id="P65275"/>
<dbReference type="UniPathway" id="UPA00048">
    <property type="reaction ID" value="UER00071"/>
</dbReference>
<dbReference type="Proteomes" id="UP000000419">
    <property type="component" value="Chromosome II"/>
</dbReference>
<dbReference type="GO" id="GO:0009316">
    <property type="term" value="C:3-isopropylmalate dehydratase complex"/>
    <property type="evidence" value="ECO:0007669"/>
    <property type="project" value="InterPro"/>
</dbReference>
<dbReference type="GO" id="GO:0003861">
    <property type="term" value="F:3-isopropylmalate dehydratase activity"/>
    <property type="evidence" value="ECO:0007669"/>
    <property type="project" value="UniProtKB-UniRule"/>
</dbReference>
<dbReference type="GO" id="GO:0009098">
    <property type="term" value="P:L-leucine biosynthetic process"/>
    <property type="evidence" value="ECO:0007669"/>
    <property type="project" value="UniProtKB-UniRule"/>
</dbReference>
<dbReference type="CDD" id="cd01577">
    <property type="entry name" value="IPMI_Swivel"/>
    <property type="match status" value="1"/>
</dbReference>
<dbReference type="FunFam" id="3.20.19.10:FF:000003">
    <property type="entry name" value="3-isopropylmalate dehydratase small subunit"/>
    <property type="match status" value="1"/>
</dbReference>
<dbReference type="Gene3D" id="3.20.19.10">
    <property type="entry name" value="Aconitase, domain 4"/>
    <property type="match status" value="1"/>
</dbReference>
<dbReference type="HAMAP" id="MF_01031">
    <property type="entry name" value="LeuD_type1"/>
    <property type="match status" value="1"/>
</dbReference>
<dbReference type="InterPro" id="IPR004431">
    <property type="entry name" value="3-IsopropMal_deHydase_ssu"/>
</dbReference>
<dbReference type="InterPro" id="IPR015928">
    <property type="entry name" value="Aconitase/3IPM_dehydase_swvl"/>
</dbReference>
<dbReference type="InterPro" id="IPR000573">
    <property type="entry name" value="AconitaseA/IPMdHydase_ssu_swvl"/>
</dbReference>
<dbReference type="InterPro" id="IPR033940">
    <property type="entry name" value="IPMI_Swivel"/>
</dbReference>
<dbReference type="InterPro" id="IPR050075">
    <property type="entry name" value="LeuD"/>
</dbReference>
<dbReference type="NCBIfam" id="TIGR00171">
    <property type="entry name" value="leuD"/>
    <property type="match status" value="1"/>
</dbReference>
<dbReference type="NCBIfam" id="NF002458">
    <property type="entry name" value="PRK01641.1"/>
    <property type="match status" value="1"/>
</dbReference>
<dbReference type="PANTHER" id="PTHR43345:SF5">
    <property type="entry name" value="3-ISOPROPYLMALATE DEHYDRATASE SMALL SUBUNIT"/>
    <property type="match status" value="1"/>
</dbReference>
<dbReference type="PANTHER" id="PTHR43345">
    <property type="entry name" value="3-ISOPROPYLMALATE DEHYDRATASE SMALL SUBUNIT 2-RELATED-RELATED"/>
    <property type="match status" value="1"/>
</dbReference>
<dbReference type="Pfam" id="PF00694">
    <property type="entry name" value="Aconitase_C"/>
    <property type="match status" value="1"/>
</dbReference>
<dbReference type="SUPFAM" id="SSF52016">
    <property type="entry name" value="LeuD/IlvD-like"/>
    <property type="match status" value="1"/>
</dbReference>
<sequence length="201" mass="22236">MDKFTKLTGVAAPLPIVNIDTDMIIPKDYLKTIKRTGLGKGLFAEMRFNEDGSENPDFVLNKPGYRKAQILVAGDNFGCGSSREHAPWALLDYGIRCVISTSFADIFYNNCFKNGILPIKVAQEDLDKLMDDASRGANATLTIDLETKQIHGPDGGTISFDLDDFKRHCLLNGLDDIGLTMEKAKSIDTFEAKNAEERPWA</sequence>
<keyword id="KW-0028">Amino-acid biosynthesis</keyword>
<keyword id="KW-0100">Branched-chain amino acid biosynthesis</keyword>
<keyword id="KW-0432">Leucine biosynthesis</keyword>
<keyword id="KW-0456">Lyase</keyword>
<accession>P65275</accession>
<accession>Q8YCW7</accession>
<gene>
    <name evidence="1" type="primary">leuD</name>
    <name type="ordered locus">BMEII0411</name>
</gene>
<protein>
    <recommendedName>
        <fullName evidence="1">3-isopropylmalate dehydratase small subunit</fullName>
        <ecNumber evidence="1">4.2.1.33</ecNumber>
    </recommendedName>
    <alternativeName>
        <fullName evidence="1">Alpha-IPM isomerase</fullName>
        <shortName evidence="1">IPMI</shortName>
    </alternativeName>
    <alternativeName>
        <fullName evidence="1">Isopropylmalate isomerase</fullName>
    </alternativeName>
</protein>
<feature type="chain" id="PRO_0000141795" description="3-isopropylmalate dehydratase small subunit">
    <location>
        <begin position="1"/>
        <end position="201"/>
    </location>
</feature>
<reference key="1">
    <citation type="journal article" date="2002" name="Proc. Natl. Acad. Sci. U.S.A.">
        <title>The genome sequence of the facultative intracellular pathogen Brucella melitensis.</title>
        <authorList>
            <person name="DelVecchio V.G."/>
            <person name="Kapatral V."/>
            <person name="Redkar R.J."/>
            <person name="Patra G."/>
            <person name="Mujer C."/>
            <person name="Los T."/>
            <person name="Ivanova N."/>
            <person name="Anderson I."/>
            <person name="Bhattacharyya A."/>
            <person name="Lykidis A."/>
            <person name="Reznik G."/>
            <person name="Jablonski L."/>
            <person name="Larsen N."/>
            <person name="D'Souza M."/>
            <person name="Bernal A."/>
            <person name="Mazur M."/>
            <person name="Goltsman E."/>
            <person name="Selkov E."/>
            <person name="Elzer P.H."/>
            <person name="Hagius S."/>
            <person name="O'Callaghan D."/>
            <person name="Letesson J.-J."/>
            <person name="Haselkorn R."/>
            <person name="Kyrpides N.C."/>
            <person name="Overbeek R."/>
        </authorList>
    </citation>
    <scope>NUCLEOTIDE SEQUENCE [LARGE SCALE GENOMIC DNA]</scope>
    <source>
        <strain>ATCC 23456 / CCUG 17765 / NCTC 10094 / 16M</strain>
    </source>
</reference>
<proteinExistence type="inferred from homology"/>